<dbReference type="EC" id="2.5.1.19" evidence="1"/>
<dbReference type="EMBL" id="CR628336">
    <property type="protein sequence ID" value="CAH12525.1"/>
    <property type="molecule type" value="Genomic_DNA"/>
</dbReference>
<dbReference type="SMR" id="Q5X5E6"/>
<dbReference type="KEGG" id="lpp:lpp1374"/>
<dbReference type="LegioList" id="lpp1374"/>
<dbReference type="HOGENOM" id="CLU_024321_0_1_6"/>
<dbReference type="UniPathway" id="UPA00053">
    <property type="reaction ID" value="UER00089"/>
</dbReference>
<dbReference type="GO" id="GO:0005737">
    <property type="term" value="C:cytoplasm"/>
    <property type="evidence" value="ECO:0007669"/>
    <property type="project" value="UniProtKB-SubCell"/>
</dbReference>
<dbReference type="GO" id="GO:0003866">
    <property type="term" value="F:3-phosphoshikimate 1-carboxyvinyltransferase activity"/>
    <property type="evidence" value="ECO:0007669"/>
    <property type="project" value="UniProtKB-UniRule"/>
</dbReference>
<dbReference type="GO" id="GO:0008652">
    <property type="term" value="P:amino acid biosynthetic process"/>
    <property type="evidence" value="ECO:0007669"/>
    <property type="project" value="UniProtKB-KW"/>
</dbReference>
<dbReference type="GO" id="GO:0009073">
    <property type="term" value="P:aromatic amino acid family biosynthetic process"/>
    <property type="evidence" value="ECO:0007669"/>
    <property type="project" value="UniProtKB-KW"/>
</dbReference>
<dbReference type="GO" id="GO:0009423">
    <property type="term" value="P:chorismate biosynthetic process"/>
    <property type="evidence" value="ECO:0007669"/>
    <property type="project" value="UniProtKB-UniRule"/>
</dbReference>
<dbReference type="CDD" id="cd01556">
    <property type="entry name" value="EPSP_synthase"/>
    <property type="match status" value="1"/>
</dbReference>
<dbReference type="FunFam" id="3.65.10.10:FF:000005">
    <property type="entry name" value="3-phosphoshikimate 1-carboxyvinyltransferase"/>
    <property type="match status" value="1"/>
</dbReference>
<dbReference type="FunFam" id="3.65.10.10:FF:000006">
    <property type="entry name" value="3-phosphoshikimate 1-carboxyvinyltransferase"/>
    <property type="match status" value="1"/>
</dbReference>
<dbReference type="Gene3D" id="3.65.10.10">
    <property type="entry name" value="Enolpyruvate transferase domain"/>
    <property type="match status" value="2"/>
</dbReference>
<dbReference type="HAMAP" id="MF_00210">
    <property type="entry name" value="EPSP_synth"/>
    <property type="match status" value="1"/>
</dbReference>
<dbReference type="InterPro" id="IPR001986">
    <property type="entry name" value="Enolpyruvate_Tfrase_dom"/>
</dbReference>
<dbReference type="InterPro" id="IPR036968">
    <property type="entry name" value="Enolpyruvate_Tfrase_sf"/>
</dbReference>
<dbReference type="InterPro" id="IPR006264">
    <property type="entry name" value="EPSP_synthase"/>
</dbReference>
<dbReference type="InterPro" id="IPR023193">
    <property type="entry name" value="EPSP_synthase_CS"/>
</dbReference>
<dbReference type="InterPro" id="IPR013792">
    <property type="entry name" value="RNA3'P_cycl/enolpyr_Trfase_a/b"/>
</dbReference>
<dbReference type="NCBIfam" id="TIGR01356">
    <property type="entry name" value="aroA"/>
    <property type="match status" value="1"/>
</dbReference>
<dbReference type="PANTHER" id="PTHR21090">
    <property type="entry name" value="AROM/DEHYDROQUINATE SYNTHASE"/>
    <property type="match status" value="1"/>
</dbReference>
<dbReference type="PANTHER" id="PTHR21090:SF5">
    <property type="entry name" value="PENTAFUNCTIONAL AROM POLYPEPTIDE"/>
    <property type="match status" value="1"/>
</dbReference>
<dbReference type="Pfam" id="PF00275">
    <property type="entry name" value="EPSP_synthase"/>
    <property type="match status" value="1"/>
</dbReference>
<dbReference type="PIRSF" id="PIRSF000505">
    <property type="entry name" value="EPSPS"/>
    <property type="match status" value="1"/>
</dbReference>
<dbReference type="SUPFAM" id="SSF55205">
    <property type="entry name" value="EPT/RTPC-like"/>
    <property type="match status" value="1"/>
</dbReference>
<dbReference type="PROSITE" id="PS00885">
    <property type="entry name" value="EPSP_SYNTHASE_2"/>
    <property type="match status" value="1"/>
</dbReference>
<sequence>MLNFISKPVGCLKGEITVPGDKSISHRSIIFGAIAIGTSVIDGFLDGEDCIATLKAFQSMGVRIEGPDKQRVIIHGVGKYGLKQPQNIIDCVNSGTSMRLLAGLLAAQQFDSQLTGDESLLKRPMLRISRPLSQMGADVTTQDGKPPIVIKGGKKLNGIHYVMPEASAQVKSCLLLAGMYAEGQTKITENAVSRDHTERMLRTFSYPVQIQDGAIVIDRNGECHGTRLNIPGDISSAAFFIVAASITPGSDVLIRNVGINPTRTGIIHILTEMGADIRVLNQRAYGEEPVADLHIRYSQLKGIDIPASMVPLAIDEFPVIFIAAACAQGKTTLHGAKELRLKESDRIGAMVDGLNQLGVHAEGFDDGILIEGGSIQGGEVNSRGDHRIAMSFAIAGAVASAPVTIKNCANVATSFPSFVTTANMLHFQIEEYS</sequence>
<keyword id="KW-0028">Amino-acid biosynthesis</keyword>
<keyword id="KW-0057">Aromatic amino acid biosynthesis</keyword>
<keyword id="KW-0963">Cytoplasm</keyword>
<keyword id="KW-0808">Transferase</keyword>
<name>AROA_LEGPA</name>
<feature type="chain" id="PRO_0000325356" description="3-phosphoshikimate 1-carboxyvinyltransferase">
    <location>
        <begin position="1"/>
        <end position="433"/>
    </location>
</feature>
<feature type="active site" description="Proton acceptor" evidence="1">
    <location>
        <position position="315"/>
    </location>
</feature>
<feature type="binding site" evidence="1">
    <location>
        <position position="22"/>
    </location>
    <ligand>
        <name>3-phosphoshikimate</name>
        <dbReference type="ChEBI" id="CHEBI:145989"/>
    </ligand>
</feature>
<feature type="binding site" evidence="1">
    <location>
        <position position="22"/>
    </location>
    <ligand>
        <name>phosphoenolpyruvate</name>
        <dbReference type="ChEBI" id="CHEBI:58702"/>
    </ligand>
</feature>
<feature type="binding site" evidence="1">
    <location>
        <position position="23"/>
    </location>
    <ligand>
        <name>3-phosphoshikimate</name>
        <dbReference type="ChEBI" id="CHEBI:145989"/>
    </ligand>
</feature>
<feature type="binding site" evidence="1">
    <location>
        <position position="27"/>
    </location>
    <ligand>
        <name>3-phosphoshikimate</name>
        <dbReference type="ChEBI" id="CHEBI:145989"/>
    </ligand>
</feature>
<feature type="binding site" evidence="1">
    <location>
        <position position="95"/>
    </location>
    <ligand>
        <name>phosphoenolpyruvate</name>
        <dbReference type="ChEBI" id="CHEBI:58702"/>
    </ligand>
</feature>
<feature type="binding site" evidence="1">
    <location>
        <position position="123"/>
    </location>
    <ligand>
        <name>phosphoenolpyruvate</name>
        <dbReference type="ChEBI" id="CHEBI:58702"/>
    </ligand>
</feature>
<feature type="binding site" evidence="1">
    <location>
        <position position="167"/>
    </location>
    <ligand>
        <name>3-phosphoshikimate</name>
        <dbReference type="ChEBI" id="CHEBI:145989"/>
    </ligand>
</feature>
<feature type="binding site" evidence="1">
    <location>
        <position position="169"/>
    </location>
    <ligand>
        <name>3-phosphoshikimate</name>
        <dbReference type="ChEBI" id="CHEBI:145989"/>
    </ligand>
</feature>
<feature type="binding site" evidence="1">
    <location>
        <position position="169"/>
    </location>
    <ligand>
        <name>phosphoenolpyruvate</name>
        <dbReference type="ChEBI" id="CHEBI:58702"/>
    </ligand>
</feature>
<feature type="binding site" evidence="1">
    <location>
        <position position="315"/>
    </location>
    <ligand>
        <name>3-phosphoshikimate</name>
        <dbReference type="ChEBI" id="CHEBI:145989"/>
    </ligand>
</feature>
<feature type="binding site" evidence="1">
    <location>
        <position position="342"/>
    </location>
    <ligand>
        <name>3-phosphoshikimate</name>
        <dbReference type="ChEBI" id="CHEBI:145989"/>
    </ligand>
</feature>
<feature type="binding site" evidence="1">
    <location>
        <position position="346"/>
    </location>
    <ligand>
        <name>phosphoenolpyruvate</name>
        <dbReference type="ChEBI" id="CHEBI:58702"/>
    </ligand>
</feature>
<feature type="binding site" evidence="1">
    <location>
        <position position="387"/>
    </location>
    <ligand>
        <name>phosphoenolpyruvate</name>
        <dbReference type="ChEBI" id="CHEBI:58702"/>
    </ligand>
</feature>
<evidence type="ECO:0000255" key="1">
    <source>
        <dbReference type="HAMAP-Rule" id="MF_00210"/>
    </source>
</evidence>
<comment type="function">
    <text evidence="1">Catalyzes the transfer of the enolpyruvyl moiety of phosphoenolpyruvate (PEP) to the 5-hydroxyl of shikimate-3-phosphate (S3P) to produce enolpyruvyl shikimate-3-phosphate and inorganic phosphate.</text>
</comment>
<comment type="catalytic activity">
    <reaction evidence="1">
        <text>3-phosphoshikimate + phosphoenolpyruvate = 5-O-(1-carboxyvinyl)-3-phosphoshikimate + phosphate</text>
        <dbReference type="Rhea" id="RHEA:21256"/>
        <dbReference type="ChEBI" id="CHEBI:43474"/>
        <dbReference type="ChEBI" id="CHEBI:57701"/>
        <dbReference type="ChEBI" id="CHEBI:58702"/>
        <dbReference type="ChEBI" id="CHEBI:145989"/>
        <dbReference type="EC" id="2.5.1.19"/>
    </reaction>
    <physiologicalReaction direction="left-to-right" evidence="1">
        <dbReference type="Rhea" id="RHEA:21257"/>
    </physiologicalReaction>
</comment>
<comment type="pathway">
    <text evidence="1">Metabolic intermediate biosynthesis; chorismate biosynthesis; chorismate from D-erythrose 4-phosphate and phosphoenolpyruvate: step 6/7.</text>
</comment>
<comment type="subunit">
    <text evidence="1">Monomer.</text>
</comment>
<comment type="subcellular location">
    <subcellularLocation>
        <location evidence="1">Cytoplasm</location>
    </subcellularLocation>
</comment>
<comment type="similarity">
    <text evidence="1">Belongs to the EPSP synthase family.</text>
</comment>
<accession>Q5X5E6</accession>
<gene>
    <name evidence="1" type="primary">aroA</name>
    <name type="ordered locus">lpp1374</name>
</gene>
<organism>
    <name type="scientific">Legionella pneumophila (strain Paris)</name>
    <dbReference type="NCBI Taxonomy" id="297246"/>
    <lineage>
        <taxon>Bacteria</taxon>
        <taxon>Pseudomonadati</taxon>
        <taxon>Pseudomonadota</taxon>
        <taxon>Gammaproteobacteria</taxon>
        <taxon>Legionellales</taxon>
        <taxon>Legionellaceae</taxon>
        <taxon>Legionella</taxon>
    </lineage>
</organism>
<proteinExistence type="inferred from homology"/>
<protein>
    <recommendedName>
        <fullName evidence="1">3-phosphoshikimate 1-carboxyvinyltransferase</fullName>
        <ecNumber evidence="1">2.5.1.19</ecNumber>
    </recommendedName>
    <alternativeName>
        <fullName evidence="1">5-enolpyruvylshikimate-3-phosphate synthase</fullName>
        <shortName evidence="1">EPSP synthase</shortName>
        <shortName evidence="1">EPSPS</shortName>
    </alternativeName>
</protein>
<reference key="1">
    <citation type="journal article" date="2004" name="Nat. Genet.">
        <title>Evidence in the Legionella pneumophila genome for exploitation of host cell functions and high genome plasticity.</title>
        <authorList>
            <person name="Cazalet C."/>
            <person name="Rusniok C."/>
            <person name="Brueggemann H."/>
            <person name="Zidane N."/>
            <person name="Magnier A."/>
            <person name="Ma L."/>
            <person name="Tichit M."/>
            <person name="Jarraud S."/>
            <person name="Bouchier C."/>
            <person name="Vandenesch F."/>
            <person name="Kunst F."/>
            <person name="Etienne J."/>
            <person name="Glaser P."/>
            <person name="Buchrieser C."/>
        </authorList>
    </citation>
    <scope>NUCLEOTIDE SEQUENCE [LARGE SCALE GENOMIC DNA]</scope>
    <source>
        <strain>Paris</strain>
    </source>
</reference>